<protein>
    <recommendedName>
        <fullName evidence="1">UPF0597 protein YE0448</fullName>
    </recommendedName>
</protein>
<dbReference type="EMBL" id="AM286415">
    <property type="protein sequence ID" value="CAL10573.1"/>
    <property type="molecule type" value="Genomic_DNA"/>
</dbReference>
<dbReference type="RefSeq" id="WP_011815452.1">
    <property type="nucleotide sequence ID" value="NC_008800.1"/>
</dbReference>
<dbReference type="RefSeq" id="YP_001004817.1">
    <property type="nucleotide sequence ID" value="NC_008800.1"/>
</dbReference>
<dbReference type="KEGG" id="yen:YE0448"/>
<dbReference type="PATRIC" id="fig|393305.7.peg.543"/>
<dbReference type="eggNOG" id="COG3681">
    <property type="taxonomic scope" value="Bacteria"/>
</dbReference>
<dbReference type="HOGENOM" id="CLU_051840_0_0_6"/>
<dbReference type="OrthoDB" id="41906at2"/>
<dbReference type="Proteomes" id="UP000000642">
    <property type="component" value="Chromosome"/>
</dbReference>
<dbReference type="GO" id="GO:0080146">
    <property type="term" value="F:L-cysteine desulfhydrase activity"/>
    <property type="evidence" value="ECO:0007669"/>
    <property type="project" value="TreeGrafter"/>
</dbReference>
<dbReference type="GO" id="GO:0019450">
    <property type="term" value="P:L-cysteine catabolic process to pyruvate"/>
    <property type="evidence" value="ECO:0007669"/>
    <property type="project" value="TreeGrafter"/>
</dbReference>
<dbReference type="HAMAP" id="MF_01845">
    <property type="entry name" value="UPF0597"/>
    <property type="match status" value="1"/>
</dbReference>
<dbReference type="InterPro" id="IPR005130">
    <property type="entry name" value="Ser_deHydtase-like_asu"/>
</dbReference>
<dbReference type="InterPro" id="IPR021144">
    <property type="entry name" value="UPF0597"/>
</dbReference>
<dbReference type="PANTHER" id="PTHR30501">
    <property type="entry name" value="UPF0597 PROTEIN YHAM"/>
    <property type="match status" value="1"/>
</dbReference>
<dbReference type="PANTHER" id="PTHR30501:SF2">
    <property type="entry name" value="UPF0597 PROTEIN YHAM"/>
    <property type="match status" value="1"/>
</dbReference>
<dbReference type="Pfam" id="PF03313">
    <property type="entry name" value="SDH_alpha"/>
    <property type="match status" value="1"/>
</dbReference>
<dbReference type="PIRSF" id="PIRSF006054">
    <property type="entry name" value="UCP006054"/>
    <property type="match status" value="1"/>
</dbReference>
<comment type="similarity">
    <text evidence="1">Belongs to the UPF0597 family.</text>
</comment>
<reference key="1">
    <citation type="journal article" date="2006" name="PLoS Genet.">
        <title>The complete genome sequence and comparative genome analysis of the high pathogenicity Yersinia enterocolitica strain 8081.</title>
        <authorList>
            <person name="Thomson N.R."/>
            <person name="Howard S."/>
            <person name="Wren B.W."/>
            <person name="Holden M.T.G."/>
            <person name="Crossman L."/>
            <person name="Challis G.L."/>
            <person name="Churcher C."/>
            <person name="Mungall K."/>
            <person name="Brooks K."/>
            <person name="Chillingworth T."/>
            <person name="Feltwell T."/>
            <person name="Abdellah Z."/>
            <person name="Hauser H."/>
            <person name="Jagels K."/>
            <person name="Maddison M."/>
            <person name="Moule S."/>
            <person name="Sanders M."/>
            <person name="Whitehead S."/>
            <person name="Quail M.A."/>
            <person name="Dougan G."/>
            <person name="Parkhill J."/>
            <person name="Prentice M.B."/>
        </authorList>
    </citation>
    <scope>NUCLEOTIDE SEQUENCE [LARGE SCALE GENOMIC DNA]</scope>
    <source>
        <strain>NCTC 13174 / 8081</strain>
    </source>
</reference>
<organism>
    <name type="scientific">Yersinia enterocolitica serotype O:8 / biotype 1B (strain NCTC 13174 / 8081)</name>
    <dbReference type="NCBI Taxonomy" id="393305"/>
    <lineage>
        <taxon>Bacteria</taxon>
        <taxon>Pseudomonadati</taxon>
        <taxon>Pseudomonadota</taxon>
        <taxon>Gammaproteobacteria</taxon>
        <taxon>Enterobacterales</taxon>
        <taxon>Yersiniaceae</taxon>
        <taxon>Yersinia</taxon>
    </lineage>
</organism>
<evidence type="ECO:0000255" key="1">
    <source>
        <dbReference type="HAMAP-Rule" id="MF_01845"/>
    </source>
</evidence>
<sequence length="438" mass="45401">MSNTTDSALWTAFIHVIQRDVQPAVGCTEPIALALASAIAASYLPAKAERIEARVSPNLMKNGMGVTVPGTGMVGLPIAAAVGALGGDPDGGLEVLKNLSSQQVVEAKAMLDRGDVRVDMQAGDEILFAEATLYHGDQWACVTIAGGHTQVVRIVINGNVLFELAPESPSEQVVCHAHDCLKQATARQVYQFATQVPFEQIAFILQAAKLNGALSQEGLTGNYGLHIGASLMRQRGRGLLVKDLLSDIMIRSAAASDARMGGALLPAMSNSGSGNQGIAATMPVVVVAEHVGASEEELARALILSHLMAIYIHNQLPTLSALCAATTAAMGAAAGMAWLLEPRYEPVALAIGSMIGDISGIICDGAANSCAMKVSTSVSAAYKAVLMALDSSGVTGNEGIVADDVDQSIANLCALACGAMRQTDSQIIEIMAHKCHCD</sequence>
<gene>
    <name type="ordered locus">YE0448</name>
</gene>
<accession>A1JIY2</accession>
<proteinExistence type="inferred from homology"/>
<name>Y448_YERE8</name>
<feature type="chain" id="PRO_0000339868" description="UPF0597 protein YE0448">
    <location>
        <begin position="1"/>
        <end position="438"/>
    </location>
</feature>